<dbReference type="EMBL" id="AF266749">
    <property type="protein sequence ID" value="AAF78063.1"/>
    <property type="molecule type" value="mRNA"/>
</dbReference>
<dbReference type="EMBL" id="DS232050">
    <property type="protein sequence ID" value="EDS33147.1"/>
    <property type="molecule type" value="Genomic_DNA"/>
</dbReference>
<dbReference type="SMR" id="Q9NB51"/>
<dbReference type="FunCoup" id="Q9NB51">
    <property type="interactions" value="1033"/>
</dbReference>
<dbReference type="STRING" id="7176.Q9NB51"/>
<dbReference type="EnsemblMetazoa" id="CPIJ009519-RA">
    <property type="protein sequence ID" value="CPIJ009519-PA"/>
    <property type="gene ID" value="CPIJ009519"/>
</dbReference>
<dbReference type="EnsemblMetazoa" id="CQUJHB005084.R7817">
    <property type="protein sequence ID" value="CQUJHB005084.P7817"/>
    <property type="gene ID" value="CQUJHB005084"/>
</dbReference>
<dbReference type="EnsemblMetazoa" id="XM_001851126.2">
    <property type="protein sequence ID" value="XP_001851178.1"/>
    <property type="gene ID" value="LOC6042010"/>
</dbReference>
<dbReference type="GeneID" id="6042010"/>
<dbReference type="KEGG" id="cqu:CpipJ_CPIJ009519"/>
<dbReference type="CTD" id="6235"/>
<dbReference type="VEuPathDB" id="VectorBase:CPIJ009519"/>
<dbReference type="VEuPathDB" id="VectorBase:CQUJHB005084"/>
<dbReference type="eggNOG" id="KOG3506">
    <property type="taxonomic scope" value="Eukaryota"/>
</dbReference>
<dbReference type="HOGENOM" id="CLU_177289_1_1_1"/>
<dbReference type="InParanoid" id="Q9NB51"/>
<dbReference type="OMA" id="HCFREIA"/>
<dbReference type="OrthoDB" id="10252683at2759"/>
<dbReference type="PhylomeDB" id="Q9NB51"/>
<dbReference type="Proteomes" id="UP000002320">
    <property type="component" value="Unassembled WGS sequence"/>
</dbReference>
<dbReference type="GO" id="GO:0022627">
    <property type="term" value="C:cytosolic small ribosomal subunit"/>
    <property type="evidence" value="ECO:0000250"/>
    <property type="project" value="UniProtKB"/>
</dbReference>
<dbReference type="GO" id="GO:0005840">
    <property type="term" value="C:ribosome"/>
    <property type="evidence" value="ECO:0000250"/>
    <property type="project" value="UniProtKB"/>
</dbReference>
<dbReference type="GO" id="GO:0005791">
    <property type="term" value="C:rough endoplasmic reticulum"/>
    <property type="evidence" value="ECO:0007669"/>
    <property type="project" value="UniProtKB-SubCell"/>
</dbReference>
<dbReference type="GO" id="GO:0003735">
    <property type="term" value="F:structural constituent of ribosome"/>
    <property type="evidence" value="ECO:0007669"/>
    <property type="project" value="InterPro"/>
</dbReference>
<dbReference type="GO" id="GO:0008270">
    <property type="term" value="F:zinc ion binding"/>
    <property type="evidence" value="ECO:0000250"/>
    <property type="project" value="UniProtKB"/>
</dbReference>
<dbReference type="GO" id="GO:0002181">
    <property type="term" value="P:cytoplasmic translation"/>
    <property type="evidence" value="ECO:0000250"/>
    <property type="project" value="UniProtKB"/>
</dbReference>
<dbReference type="FunFam" id="4.10.830.10:FF:000002">
    <property type="entry name" value="40S ribosomal protein S29"/>
    <property type="match status" value="1"/>
</dbReference>
<dbReference type="Gene3D" id="4.10.830.10">
    <property type="entry name" value="30s Ribosomal Protein S14, Chain N"/>
    <property type="match status" value="1"/>
</dbReference>
<dbReference type="InterPro" id="IPR001209">
    <property type="entry name" value="Ribosomal_uS14"/>
</dbReference>
<dbReference type="InterPro" id="IPR018271">
    <property type="entry name" value="Ribosomal_uS14_CS"/>
</dbReference>
<dbReference type="InterPro" id="IPR039744">
    <property type="entry name" value="RIbosomal_uS14_euk_arc"/>
</dbReference>
<dbReference type="InterPro" id="IPR043140">
    <property type="entry name" value="Ribosomal_uS14_sf"/>
</dbReference>
<dbReference type="NCBIfam" id="NF004424">
    <property type="entry name" value="PRK05766.1"/>
    <property type="match status" value="1"/>
</dbReference>
<dbReference type="PANTHER" id="PTHR12010">
    <property type="entry name" value="40S RIBOSOMAL PROTEIN S29"/>
    <property type="match status" value="1"/>
</dbReference>
<dbReference type="PANTHER" id="PTHR12010:SF2">
    <property type="entry name" value="40S RIBOSOMAL PROTEIN S29"/>
    <property type="match status" value="1"/>
</dbReference>
<dbReference type="Pfam" id="PF00253">
    <property type="entry name" value="Ribosomal_S14"/>
    <property type="match status" value="1"/>
</dbReference>
<dbReference type="PROSITE" id="PS00527">
    <property type="entry name" value="RIBOSOMAL_S14"/>
    <property type="match status" value="1"/>
</dbReference>
<reference key="1">
    <citation type="submission" date="2000-05" db="EMBL/GenBank/DDBJ databases">
        <title>Differentially expressed genes of Culex quinquefasciatus infected with Dengue 2 virus.</title>
        <authorList>
            <person name="Yang F.F."/>
            <person name="Zhao T.T."/>
            <person name="Li D.D."/>
        </authorList>
    </citation>
    <scope>NUCLEOTIDE SEQUENCE [MRNA]</scope>
</reference>
<reference key="2">
    <citation type="submission" date="2007-03" db="EMBL/GenBank/DDBJ databases">
        <title>Annotation of Culex pipiens quinquefasciatus.</title>
        <authorList>
            <consortium name="The Broad Institute Genome Sequencing Platform"/>
            <person name="Atkinson P.W."/>
            <person name="Hemingway J."/>
            <person name="Christensen B.M."/>
            <person name="Higgs S."/>
            <person name="Kodira C.D."/>
            <person name="Hannick L.I."/>
            <person name="Megy K."/>
            <person name="O'Leary S.B."/>
            <person name="Pearson M."/>
            <person name="Haas B.J."/>
            <person name="Mauceli E."/>
            <person name="Wortman J.R."/>
            <person name="Lee N.H."/>
            <person name="Guigo R."/>
            <person name="Stanke M."/>
            <person name="Alvarado L."/>
            <person name="Amedeo P."/>
            <person name="Antoine C.H."/>
            <person name="Arensburger P."/>
            <person name="Bidwell S.L."/>
            <person name="Crawford M."/>
            <person name="Camaro F."/>
            <person name="Devon K."/>
            <person name="Engels R."/>
            <person name="Hammond M."/>
            <person name="Howarth C."/>
            <person name="Koehrsen M."/>
            <person name="Lawson D."/>
            <person name="Montgomery P."/>
            <person name="Nene V."/>
            <person name="Nusbaum C."/>
            <person name="Puiu D."/>
            <person name="Romero-Severson J."/>
            <person name="Severson D.W."/>
            <person name="Shumway M."/>
            <person name="Sisk P."/>
            <person name="Stolte C."/>
            <person name="Zeng Q."/>
            <person name="Eisenstadt E."/>
            <person name="Fraser-Liggett C.M."/>
            <person name="Strausberg R."/>
            <person name="Galagan J."/>
            <person name="Birren B."/>
            <person name="Collins F.H."/>
        </authorList>
    </citation>
    <scope>NUCLEOTIDE SEQUENCE [LARGE SCALE GENOMIC DNA]</scope>
    <source>
        <strain>JHB</strain>
    </source>
</reference>
<proteinExistence type="inferred from homology"/>
<evidence type="ECO:0000250" key="1">
    <source>
        <dbReference type="UniProtKB" id="P62273"/>
    </source>
</evidence>
<evidence type="ECO:0000250" key="2">
    <source>
        <dbReference type="UniProtKB" id="Q6QAP6"/>
    </source>
</evidence>
<evidence type="ECO:0000250" key="3">
    <source>
        <dbReference type="UniProtKB" id="Q9VH69"/>
    </source>
</evidence>
<evidence type="ECO:0000255" key="4"/>
<evidence type="ECO:0000305" key="5"/>
<feature type="chain" id="PRO_0000131025" description="Small ribosomal subunit protein uS14">
    <location>
        <begin position="1"/>
        <end position="56"/>
    </location>
</feature>
<feature type="binding site" evidence="4">
    <location>
        <position position="21"/>
    </location>
    <ligand>
        <name>Zn(2+)</name>
        <dbReference type="ChEBI" id="CHEBI:29105"/>
    </ligand>
</feature>
<feature type="binding site" evidence="4">
    <location>
        <position position="24"/>
    </location>
    <ligand>
        <name>Zn(2+)</name>
        <dbReference type="ChEBI" id="CHEBI:29105"/>
    </ligand>
</feature>
<feature type="binding site" evidence="4">
    <location>
        <position position="39"/>
    </location>
    <ligand>
        <name>Zn(2+)</name>
        <dbReference type="ChEBI" id="CHEBI:29105"/>
    </ligand>
</feature>
<feature type="binding site" evidence="4">
    <location>
        <position position="42"/>
    </location>
    <ligand>
        <name>Zn(2+)</name>
        <dbReference type="ChEBI" id="CHEBI:29105"/>
    </ligand>
</feature>
<comment type="cofactor">
    <cofactor evidence="1">
        <name>Zn(2+)</name>
        <dbReference type="ChEBI" id="CHEBI:29105"/>
    </cofactor>
    <text evidence="1">Binds 1 zinc ion per subunit.</text>
</comment>
<comment type="subunit">
    <text evidence="3">Component of the 40S small ribosomal subunit.</text>
</comment>
<comment type="subcellular location">
    <subcellularLocation>
        <location evidence="1">Cytoplasm</location>
        <location evidence="1">Cytosol</location>
    </subcellularLocation>
    <subcellularLocation>
        <location evidence="1">Cytoplasm</location>
    </subcellularLocation>
    <subcellularLocation>
        <location evidence="2">Rough endoplasmic reticulum</location>
    </subcellularLocation>
    <text evidence="1 2">Detected on cytosolic polysomes (By similarity). Detected in ribosomes that are associated with the rough endoplasmic reticulum (By similarity).</text>
</comment>
<comment type="similarity">
    <text evidence="5">Belongs to the universal ribosomal protein uS14 family.</text>
</comment>
<organism>
    <name type="scientific">Culex quinquefasciatus</name>
    <name type="common">Southern house mosquito</name>
    <name type="synonym">Culex pungens</name>
    <dbReference type="NCBI Taxonomy" id="7176"/>
    <lineage>
        <taxon>Eukaryota</taxon>
        <taxon>Metazoa</taxon>
        <taxon>Ecdysozoa</taxon>
        <taxon>Arthropoda</taxon>
        <taxon>Hexapoda</taxon>
        <taxon>Insecta</taxon>
        <taxon>Pterygota</taxon>
        <taxon>Neoptera</taxon>
        <taxon>Endopterygota</taxon>
        <taxon>Diptera</taxon>
        <taxon>Nematocera</taxon>
        <taxon>Culicoidea</taxon>
        <taxon>Culicidae</taxon>
        <taxon>Culicinae</taxon>
        <taxon>Culicini</taxon>
        <taxon>Culex</taxon>
        <taxon>Culex</taxon>
    </lineage>
</organism>
<sequence length="56" mass="6667">MGFADLWYSHPRKYGQGSRFCRACSNNHGMIRKYGLNICRQCFREYAKDIGFRKLD</sequence>
<name>RS29_CULQU</name>
<keyword id="KW-0963">Cytoplasm</keyword>
<keyword id="KW-0256">Endoplasmic reticulum</keyword>
<keyword id="KW-0479">Metal-binding</keyword>
<keyword id="KW-1185">Reference proteome</keyword>
<keyword id="KW-0687">Ribonucleoprotein</keyword>
<keyword id="KW-0689">Ribosomal protein</keyword>
<keyword id="KW-0862">Zinc</keyword>
<protein>
    <recommendedName>
        <fullName evidence="5">Small ribosomal subunit protein uS14</fullName>
    </recommendedName>
    <alternativeName>
        <fullName>40S ribosomal protein S29</fullName>
    </alternativeName>
</protein>
<accession>Q9NB51</accession>
<accession>B0WR44</accession>
<gene>
    <name type="primary">RpS29</name>
    <name type="ORF">CPIJ009519</name>
</gene>